<accession>Q19857</accession>
<accession>Q23160</accession>
<accession>Q8I0R8</accession>
<organism>
    <name type="scientific">Caenorhabditis elegans</name>
    <dbReference type="NCBI Taxonomy" id="6239"/>
    <lineage>
        <taxon>Eukaryota</taxon>
        <taxon>Metazoa</taxon>
        <taxon>Ecdysozoa</taxon>
        <taxon>Nematoda</taxon>
        <taxon>Chromadorea</taxon>
        <taxon>Rhabditida</taxon>
        <taxon>Rhabditina</taxon>
        <taxon>Rhabditomorpha</taxon>
        <taxon>Rhabditoidea</taxon>
        <taxon>Rhabditidae</taxon>
        <taxon>Peloderinae</taxon>
        <taxon>Caenorhabditis</taxon>
    </lineage>
</organism>
<protein>
    <recommendedName>
        <fullName>Protein phosphatase 1 regulatory subunit 37 homolog</fullName>
    </recommendedName>
</protein>
<keyword id="KW-0025">Alternative splicing</keyword>
<keyword id="KW-0433">Leucine-rich repeat</keyword>
<keyword id="KW-1185">Reference proteome</keyword>
<keyword id="KW-0677">Repeat</keyword>
<gene>
    <name type="ORF">F28C1.3</name>
</gene>
<comment type="alternative products">
    <event type="alternative splicing"/>
    <isoform>
        <id>Q19857-1</id>
        <name>a</name>
        <sequence type="displayed"/>
    </isoform>
    <isoform>
        <id>Q19857-2</id>
        <name>b</name>
        <sequence type="described" ref="VSP_031756"/>
    </isoform>
</comment>
<comment type="similarity">
    <text evidence="2">Belongs to the PPP1R37 family.</text>
</comment>
<name>PPR37_CAEEL</name>
<dbReference type="EMBL" id="Z75539">
    <property type="protein sequence ID" value="CAD54134.1"/>
    <property type="molecule type" value="Genomic_DNA"/>
</dbReference>
<dbReference type="EMBL" id="Z75552">
    <property type="protein sequence ID" value="CAD54134.1"/>
    <property type="status" value="JOINED"/>
    <property type="molecule type" value="Genomic_DNA"/>
</dbReference>
<dbReference type="EMBL" id="Z75539">
    <property type="protein sequence ID" value="CAA99846.3"/>
    <property type="molecule type" value="Genomic_DNA"/>
</dbReference>
<dbReference type="EMBL" id="Z75552">
    <property type="protein sequence ID" value="CAA99846.3"/>
    <property type="status" value="JOINED"/>
    <property type="molecule type" value="Genomic_DNA"/>
</dbReference>
<dbReference type="PIR" id="C89243">
    <property type="entry name" value="C89243"/>
</dbReference>
<dbReference type="PIR" id="T21471">
    <property type="entry name" value="T21471"/>
</dbReference>
<dbReference type="RefSeq" id="NP_506126.2">
    <molecule id="Q19857-1"/>
    <property type="nucleotide sequence ID" value="NM_073725.4"/>
</dbReference>
<dbReference type="RefSeq" id="NP_872197.1">
    <molecule id="Q19857-2"/>
    <property type="nucleotide sequence ID" value="NM_182397.6"/>
</dbReference>
<dbReference type="SMR" id="Q19857"/>
<dbReference type="FunCoup" id="Q19857">
    <property type="interactions" value="166"/>
</dbReference>
<dbReference type="PaxDb" id="6239-F28C1.3a"/>
<dbReference type="EnsemblMetazoa" id="F28C1.3a.1">
    <molecule id="Q19857-1"/>
    <property type="protein sequence ID" value="F28C1.3a.1"/>
    <property type="gene ID" value="WBGene00009201"/>
</dbReference>
<dbReference type="EnsemblMetazoa" id="F28C1.3b.1">
    <molecule id="Q19857-2"/>
    <property type="protein sequence ID" value="F28C1.3b.1"/>
    <property type="gene ID" value="WBGene00009201"/>
</dbReference>
<dbReference type="GeneID" id="179708"/>
<dbReference type="KEGG" id="cel:CELE_F28C1.3"/>
<dbReference type="UCSC" id="F28C1.3a">
    <molecule id="Q19857-1"/>
    <property type="organism name" value="c. elegans"/>
</dbReference>
<dbReference type="AGR" id="WB:WBGene00009201"/>
<dbReference type="CTD" id="179708"/>
<dbReference type="WormBase" id="F28C1.3a">
    <molecule id="Q19857-1"/>
    <property type="protein sequence ID" value="CE31919"/>
    <property type="gene ID" value="WBGene00009201"/>
</dbReference>
<dbReference type="WormBase" id="F28C1.3b">
    <molecule id="Q19857-2"/>
    <property type="protein sequence ID" value="CE31920"/>
    <property type="gene ID" value="WBGene00009201"/>
</dbReference>
<dbReference type="eggNOG" id="KOG1908">
    <property type="taxonomic scope" value="Eukaryota"/>
</dbReference>
<dbReference type="GeneTree" id="ENSGT00940000157454"/>
<dbReference type="HOGENOM" id="CLU_311279_0_0_1"/>
<dbReference type="InParanoid" id="Q19857"/>
<dbReference type="OMA" id="IEFYDSC"/>
<dbReference type="OrthoDB" id="10034042at2759"/>
<dbReference type="PhylomeDB" id="Q19857"/>
<dbReference type="PRO" id="PR:Q19857"/>
<dbReference type="Proteomes" id="UP000001940">
    <property type="component" value="Chromosome V"/>
</dbReference>
<dbReference type="Bgee" id="WBGene00009201">
    <property type="expression patterns" value="Expressed in pharyngeal muscle cell (C elegans) and 4 other cell types or tissues"/>
</dbReference>
<dbReference type="ExpressionAtlas" id="Q19857">
    <property type="expression patterns" value="baseline and differential"/>
</dbReference>
<dbReference type="CDD" id="cd00116">
    <property type="entry name" value="LRR_RI"/>
    <property type="match status" value="1"/>
</dbReference>
<dbReference type="Gene3D" id="3.80.10.10">
    <property type="entry name" value="Ribonuclease Inhibitor"/>
    <property type="match status" value="1"/>
</dbReference>
<dbReference type="InterPro" id="IPR001611">
    <property type="entry name" value="Leu-rich_rpt"/>
</dbReference>
<dbReference type="InterPro" id="IPR032675">
    <property type="entry name" value="LRR_dom_sf"/>
</dbReference>
<dbReference type="InterPro" id="IPR051279">
    <property type="entry name" value="PP1-Reg/Actin-Interact_Protein"/>
</dbReference>
<dbReference type="PANTHER" id="PTHR24112">
    <property type="entry name" value="LEUCINE-RICH REPEAT, ISOFORM F-RELATED"/>
    <property type="match status" value="1"/>
</dbReference>
<dbReference type="PANTHER" id="PTHR24112:SF9">
    <property type="entry name" value="PROTEIN PHOSPHATASE 1 REGULATORY SUBUNIT 37"/>
    <property type="match status" value="1"/>
</dbReference>
<dbReference type="Pfam" id="PF13516">
    <property type="entry name" value="LRR_6"/>
    <property type="match status" value="2"/>
</dbReference>
<dbReference type="SMART" id="SM00368">
    <property type="entry name" value="LRR_RI"/>
    <property type="match status" value="7"/>
</dbReference>
<dbReference type="SUPFAM" id="SSF52047">
    <property type="entry name" value="RNI-like"/>
    <property type="match status" value="1"/>
</dbReference>
<sequence length="944" mass="104236">MSMKFLTGLQDLLGLYETGTAASSPASPIPPTSPAMFAVPPQQQSHSAATSVRKKTCQDANSSGEDPNGRIRQCSHARTVSFPADMDLITGYHEAPSSLFHSYHDSQRVIDSSEILTAYREACQRRQCAPSAAVEKQIGYFHKSPDTRQELLSLKGERVSHAQMEALEEIFKRVQFNTIDFEYTFLDDDCAISLGEMIEFYDSCVRLNLSFNKQIDMRGWTTIFRSIRHAVSLQMLNLRYTNLNDRSIPALCKMARAQPSASLTCLHLENTQMSGKNLLVLICALKNNTGLRELYLGDNGLQPTDGSHIYQLITSNSSLQLLDLRNNSIGDSGVRHICDGLRHREAVEKSSLSAMVLWNNNVTGASMDSLAEALIENTKIETLNIGNNNLGVEGIARLKPALASNSHLHRLGLQNTGINCEGAIILAECIADNIALLRVDIRDNPIALAGLLALHSAMKMNTSITLLNIDASCVKLSSEKVREYQDEFERYFREIQTYCDRNKDDVLKRLTVTFDDEEGDSGVEKKDGNECEGEDNKDRQDTPAETENGVSSNESKLENEEVGVSKPESNNNEKSPLMASSSTSKLSRKERHQRFVRSSSLTCTETVHDIHDRLREMSGSTHSLDAAIAAAASNSTMQNLLTVSYGSNPGPLDSSSNSESMKTIKKSFTVTAASSSSLPLAEWGSLPALPQASPSSTPVVRKLRRFSVSPSSSVFDVATTSSAASSTASSPIPENSIALPVRPSTLAIGIPIIGSVPAGPSSAPLILVEDHKDGPITSNQISDTERRISEEIERQKKDEQEIEKSCRSVIRDLLNYVEYEEKSQVERKASLLLRNTFSRPNPEELLRNLRLSEATGSTTPRTPLTPSRYVQVFNINSFLKLYFIKACILRVLEIAEELEGESDEQICQSVIRCLVRDVLQAEKNELRSTLDRRRRHNSVRNSPV</sequence>
<proteinExistence type="inferred from homology"/>
<reference key="1">
    <citation type="journal article" date="1998" name="Science">
        <title>Genome sequence of the nematode C. elegans: a platform for investigating biology.</title>
        <authorList>
            <consortium name="The C. elegans sequencing consortium"/>
        </authorList>
    </citation>
    <scope>NUCLEOTIDE SEQUENCE [LARGE SCALE GENOMIC DNA]</scope>
    <scope>ALTERNATIVE SPLICING</scope>
    <source>
        <strain>Bristol N2</strain>
    </source>
</reference>
<feature type="chain" id="PRO_0000320943" description="Protein phosphatase 1 regulatory subunit 37 homolog">
    <location>
        <begin position="1"/>
        <end position="944"/>
    </location>
</feature>
<feature type="repeat" description="LRR 1">
    <location>
        <begin position="203"/>
        <end position="224"/>
    </location>
</feature>
<feature type="repeat" description="LRR 2">
    <location>
        <begin position="232"/>
        <end position="255"/>
    </location>
</feature>
<feature type="repeat" description="LRR 3">
    <location>
        <begin position="262"/>
        <end position="282"/>
    </location>
</feature>
<feature type="repeat" description="LRR 4">
    <location>
        <begin position="290"/>
        <end position="311"/>
    </location>
</feature>
<feature type="repeat" description="LRR 5">
    <location>
        <begin position="318"/>
        <end position="338"/>
    </location>
</feature>
<feature type="region of interest" description="Disordered" evidence="1">
    <location>
        <begin position="42"/>
        <end position="71"/>
    </location>
</feature>
<feature type="region of interest" description="Disordered" evidence="1">
    <location>
        <begin position="517"/>
        <end position="598"/>
    </location>
</feature>
<feature type="compositionally biased region" description="Basic and acidic residues" evidence="1">
    <location>
        <begin position="522"/>
        <end position="542"/>
    </location>
</feature>
<feature type="compositionally biased region" description="Polar residues" evidence="1">
    <location>
        <begin position="543"/>
        <end position="554"/>
    </location>
</feature>
<feature type="compositionally biased region" description="Polar residues" evidence="1">
    <location>
        <begin position="567"/>
        <end position="585"/>
    </location>
</feature>
<feature type="compositionally biased region" description="Basic residues" evidence="1">
    <location>
        <begin position="586"/>
        <end position="595"/>
    </location>
</feature>
<feature type="splice variant" id="VSP_031756" description="In isoform b." evidence="2">
    <location>
        <begin position="481"/>
        <end position="485"/>
    </location>
</feature>
<evidence type="ECO:0000256" key="1">
    <source>
        <dbReference type="SAM" id="MobiDB-lite"/>
    </source>
</evidence>
<evidence type="ECO:0000305" key="2"/>